<sequence>MSVKKKDLITLQDPEAKYPLPLIEKEQISHNTRRFRFGLPSPDHVLGLPVGNYVHLLAQINNELVIRAYTPVSSDDDQGFVDLIIKIYFKNVHPKYPEGGKMTQYLENMKIGDTILFRGPTGRLFYNEPGTLLIKANKTSEPEKKLVHHLGMIAGGTGITPMLQLIRHITKDTSDETRMSLLFANQTEEDILLRKELEEVATTHHKQFNLWYTLDRPPSDWKYSSGFVSADMIKEHLPPPGEDTLILVCGPPPLIQAAAHPSLEQLSYTKDMIFIY</sequence>
<gene>
    <name type="primary">Cyb5r2</name>
</gene>
<comment type="function">
    <text evidence="1">NADH-cytochrome b5 reductases are involved in desaturation and elongation of fatty acids, cholesterol biosynthesis, drug metabolism, and, in erythrocyte, methemoglobin reduction. Responsible for NADH-dependent lucigenin chemiluminescence in spermatozoa by reducing both lucigenin and 2-[4-iodophenyl]-3-[4-nitrophenyl]-5-[2,4-disulfophenyl]-2H tetrazolium monosodium salt (WST-1) (By similarity).</text>
</comment>
<comment type="catalytic activity">
    <reaction>
        <text>2 Fe(III)-[cytochrome b5] + NADH = 2 Fe(II)-[cytochrome b5] + NAD(+) + H(+)</text>
        <dbReference type="Rhea" id="RHEA:46680"/>
        <dbReference type="Rhea" id="RHEA-COMP:10438"/>
        <dbReference type="Rhea" id="RHEA-COMP:10439"/>
        <dbReference type="ChEBI" id="CHEBI:15378"/>
        <dbReference type="ChEBI" id="CHEBI:29033"/>
        <dbReference type="ChEBI" id="CHEBI:29034"/>
        <dbReference type="ChEBI" id="CHEBI:57540"/>
        <dbReference type="ChEBI" id="CHEBI:57945"/>
        <dbReference type="EC" id="1.6.2.2"/>
    </reaction>
</comment>
<comment type="cofactor">
    <cofactor evidence="1">
        <name>FAD</name>
        <dbReference type="ChEBI" id="CHEBI:57692"/>
    </cofactor>
</comment>
<comment type="alternative products">
    <event type="alternative splicing"/>
    <isoform>
        <id>Q3KNK3-1</id>
        <name>1</name>
        <sequence type="displayed"/>
    </isoform>
    <isoform>
        <id>Q3KNK3-2</id>
        <name>2</name>
        <sequence type="described" ref="VSP_025560"/>
    </isoform>
</comment>
<comment type="similarity">
    <text evidence="5">Belongs to the flavoprotein pyridine nucleotide cytochrome reductase family.</text>
</comment>
<name>NB5R2_MOUSE</name>
<evidence type="ECO:0000250" key="1"/>
<evidence type="ECO:0000250" key="2">
    <source>
        <dbReference type="UniProtKB" id="P00387"/>
    </source>
</evidence>
<evidence type="ECO:0000255" key="3">
    <source>
        <dbReference type="PROSITE-ProRule" id="PRU00716"/>
    </source>
</evidence>
<evidence type="ECO:0000303" key="4">
    <source>
    </source>
</evidence>
<evidence type="ECO:0000305" key="5"/>
<protein>
    <recommendedName>
        <fullName>NADH-cytochrome b5 reductase 2</fullName>
        <shortName>b5R.2</shortName>
        <ecNumber>1.6.2.2</ecNumber>
    </recommendedName>
</protein>
<keyword id="KW-0007">Acetylation</keyword>
<keyword id="KW-0025">Alternative splicing</keyword>
<keyword id="KW-0274">FAD</keyword>
<keyword id="KW-0285">Flavoprotein</keyword>
<keyword id="KW-0444">Lipid biosynthesis</keyword>
<keyword id="KW-0443">Lipid metabolism</keyword>
<keyword id="KW-0520">NAD</keyword>
<keyword id="KW-0560">Oxidoreductase</keyword>
<keyword id="KW-0597">Phosphoprotein</keyword>
<keyword id="KW-1185">Reference proteome</keyword>
<keyword id="KW-0752">Steroid biosynthesis</keyword>
<keyword id="KW-0753">Steroid metabolism</keyword>
<keyword id="KW-0756">Sterol biosynthesis</keyword>
<keyword id="KW-1207">Sterol metabolism</keyword>
<feature type="chain" id="PRO_0000287549" description="NADH-cytochrome b5 reductase 2">
    <location>
        <begin position="1"/>
        <end position="276"/>
    </location>
</feature>
<feature type="domain" description="FAD-binding FR-type" evidence="3">
    <location>
        <begin position="15"/>
        <end position="127"/>
    </location>
</feature>
<feature type="binding site" evidence="1">
    <location>
        <begin position="107"/>
        <end position="137"/>
    </location>
    <ligand>
        <name>FAD</name>
        <dbReference type="ChEBI" id="CHEBI:57692"/>
    </ligand>
</feature>
<feature type="binding site" evidence="1">
    <location>
        <begin position="146"/>
        <end position="181"/>
    </location>
    <ligand>
        <name>FAD</name>
        <dbReference type="ChEBI" id="CHEBI:57692"/>
    </ligand>
</feature>
<feature type="modified residue" description="N6-acetyllysine" evidence="2">
    <location>
        <position position="17"/>
    </location>
</feature>
<feature type="modified residue" description="Phosphotyrosine" evidence="2">
    <location>
        <position position="18"/>
    </location>
</feature>
<feature type="splice variant" id="VSP_025560" description="In isoform 2." evidence="4">
    <original>G</original>
    <variation>GCQTRAAEVKNIFIFLG</variation>
    <location>
        <position position="130"/>
    </location>
</feature>
<feature type="sequence conflict" description="In Ref. 2; AAI07239." evidence="5" ref="2">
    <original>L</original>
    <variation>I</variation>
    <location>
        <position position="132"/>
    </location>
</feature>
<feature type="sequence conflict" description="In Ref. 2; AAI07239." evidence="5" ref="2">
    <original>S</original>
    <variation>G</variation>
    <location>
        <position position="267"/>
    </location>
</feature>
<feature type="sequence conflict" description="In Ref. 2; AAI07239." evidence="5" ref="2">
    <original>I</original>
    <variation>T</variation>
    <location>
        <position position="275"/>
    </location>
</feature>
<reference key="1">
    <citation type="journal article" date="2005" name="Science">
        <title>The transcriptional landscape of the mammalian genome.</title>
        <authorList>
            <person name="Carninci P."/>
            <person name="Kasukawa T."/>
            <person name="Katayama S."/>
            <person name="Gough J."/>
            <person name="Frith M.C."/>
            <person name="Maeda N."/>
            <person name="Oyama R."/>
            <person name="Ravasi T."/>
            <person name="Lenhard B."/>
            <person name="Wells C."/>
            <person name="Kodzius R."/>
            <person name="Shimokawa K."/>
            <person name="Bajic V.B."/>
            <person name="Brenner S.E."/>
            <person name="Batalov S."/>
            <person name="Forrest A.R."/>
            <person name="Zavolan M."/>
            <person name="Davis M.J."/>
            <person name="Wilming L.G."/>
            <person name="Aidinis V."/>
            <person name="Allen J.E."/>
            <person name="Ambesi-Impiombato A."/>
            <person name="Apweiler R."/>
            <person name="Aturaliya R.N."/>
            <person name="Bailey T.L."/>
            <person name="Bansal M."/>
            <person name="Baxter L."/>
            <person name="Beisel K.W."/>
            <person name="Bersano T."/>
            <person name="Bono H."/>
            <person name="Chalk A.M."/>
            <person name="Chiu K.P."/>
            <person name="Choudhary V."/>
            <person name="Christoffels A."/>
            <person name="Clutterbuck D.R."/>
            <person name="Crowe M.L."/>
            <person name="Dalla E."/>
            <person name="Dalrymple B.P."/>
            <person name="de Bono B."/>
            <person name="Della Gatta G."/>
            <person name="di Bernardo D."/>
            <person name="Down T."/>
            <person name="Engstrom P."/>
            <person name="Fagiolini M."/>
            <person name="Faulkner G."/>
            <person name="Fletcher C.F."/>
            <person name="Fukushima T."/>
            <person name="Furuno M."/>
            <person name="Futaki S."/>
            <person name="Gariboldi M."/>
            <person name="Georgii-Hemming P."/>
            <person name="Gingeras T.R."/>
            <person name="Gojobori T."/>
            <person name="Green R.E."/>
            <person name="Gustincich S."/>
            <person name="Harbers M."/>
            <person name="Hayashi Y."/>
            <person name="Hensch T.K."/>
            <person name="Hirokawa N."/>
            <person name="Hill D."/>
            <person name="Huminiecki L."/>
            <person name="Iacono M."/>
            <person name="Ikeo K."/>
            <person name="Iwama A."/>
            <person name="Ishikawa T."/>
            <person name="Jakt M."/>
            <person name="Kanapin A."/>
            <person name="Katoh M."/>
            <person name="Kawasawa Y."/>
            <person name="Kelso J."/>
            <person name="Kitamura H."/>
            <person name="Kitano H."/>
            <person name="Kollias G."/>
            <person name="Krishnan S.P."/>
            <person name="Kruger A."/>
            <person name="Kummerfeld S.K."/>
            <person name="Kurochkin I.V."/>
            <person name="Lareau L.F."/>
            <person name="Lazarevic D."/>
            <person name="Lipovich L."/>
            <person name="Liu J."/>
            <person name="Liuni S."/>
            <person name="McWilliam S."/>
            <person name="Madan Babu M."/>
            <person name="Madera M."/>
            <person name="Marchionni L."/>
            <person name="Matsuda H."/>
            <person name="Matsuzawa S."/>
            <person name="Miki H."/>
            <person name="Mignone F."/>
            <person name="Miyake S."/>
            <person name="Morris K."/>
            <person name="Mottagui-Tabar S."/>
            <person name="Mulder N."/>
            <person name="Nakano N."/>
            <person name="Nakauchi H."/>
            <person name="Ng P."/>
            <person name="Nilsson R."/>
            <person name="Nishiguchi S."/>
            <person name="Nishikawa S."/>
            <person name="Nori F."/>
            <person name="Ohara O."/>
            <person name="Okazaki Y."/>
            <person name="Orlando V."/>
            <person name="Pang K.C."/>
            <person name="Pavan W.J."/>
            <person name="Pavesi G."/>
            <person name="Pesole G."/>
            <person name="Petrovsky N."/>
            <person name="Piazza S."/>
            <person name="Reed J."/>
            <person name="Reid J.F."/>
            <person name="Ring B.Z."/>
            <person name="Ringwald M."/>
            <person name="Rost B."/>
            <person name="Ruan Y."/>
            <person name="Salzberg S.L."/>
            <person name="Sandelin A."/>
            <person name="Schneider C."/>
            <person name="Schoenbach C."/>
            <person name="Sekiguchi K."/>
            <person name="Semple C.A."/>
            <person name="Seno S."/>
            <person name="Sessa L."/>
            <person name="Sheng Y."/>
            <person name="Shibata Y."/>
            <person name="Shimada H."/>
            <person name="Shimada K."/>
            <person name="Silva D."/>
            <person name="Sinclair B."/>
            <person name="Sperling S."/>
            <person name="Stupka E."/>
            <person name="Sugiura K."/>
            <person name="Sultana R."/>
            <person name="Takenaka Y."/>
            <person name="Taki K."/>
            <person name="Tammoja K."/>
            <person name="Tan S.L."/>
            <person name="Tang S."/>
            <person name="Taylor M.S."/>
            <person name="Tegner J."/>
            <person name="Teichmann S.A."/>
            <person name="Ueda H.R."/>
            <person name="van Nimwegen E."/>
            <person name="Verardo R."/>
            <person name="Wei C.L."/>
            <person name="Yagi K."/>
            <person name="Yamanishi H."/>
            <person name="Zabarovsky E."/>
            <person name="Zhu S."/>
            <person name="Zimmer A."/>
            <person name="Hide W."/>
            <person name="Bult C."/>
            <person name="Grimmond S.M."/>
            <person name="Teasdale R.D."/>
            <person name="Liu E.T."/>
            <person name="Brusic V."/>
            <person name="Quackenbush J."/>
            <person name="Wahlestedt C."/>
            <person name="Mattick J.S."/>
            <person name="Hume D.A."/>
            <person name="Kai C."/>
            <person name="Sasaki D."/>
            <person name="Tomaru Y."/>
            <person name="Fukuda S."/>
            <person name="Kanamori-Katayama M."/>
            <person name="Suzuki M."/>
            <person name="Aoki J."/>
            <person name="Arakawa T."/>
            <person name="Iida J."/>
            <person name="Imamura K."/>
            <person name="Itoh M."/>
            <person name="Kato T."/>
            <person name="Kawaji H."/>
            <person name="Kawagashira N."/>
            <person name="Kawashima T."/>
            <person name="Kojima M."/>
            <person name="Kondo S."/>
            <person name="Konno H."/>
            <person name="Nakano K."/>
            <person name="Ninomiya N."/>
            <person name="Nishio T."/>
            <person name="Okada M."/>
            <person name="Plessy C."/>
            <person name="Shibata K."/>
            <person name="Shiraki T."/>
            <person name="Suzuki S."/>
            <person name="Tagami M."/>
            <person name="Waki K."/>
            <person name="Watahiki A."/>
            <person name="Okamura-Oho Y."/>
            <person name="Suzuki H."/>
            <person name="Kawai J."/>
            <person name="Hayashizaki Y."/>
        </authorList>
    </citation>
    <scope>NUCLEOTIDE SEQUENCE [LARGE SCALE MRNA] (ISOFORMS 1 AND 2)</scope>
    <source>
        <strain>C57BL/6J</strain>
        <tissue>Kidney</tissue>
    </source>
</reference>
<reference key="2">
    <citation type="journal article" date="2004" name="Genome Res.">
        <title>The status, quality, and expansion of the NIH full-length cDNA project: the Mammalian Gene Collection (MGC).</title>
        <authorList>
            <consortium name="The MGC Project Team"/>
        </authorList>
    </citation>
    <scope>NUCLEOTIDE SEQUENCE [LARGE SCALE MRNA] (ISOFORM 1)</scope>
</reference>
<accession>Q3KNK3</accession>
<accession>Q3UGG1</accession>
<accession>Q8BUG7</accession>
<organism>
    <name type="scientific">Mus musculus</name>
    <name type="common">Mouse</name>
    <dbReference type="NCBI Taxonomy" id="10090"/>
    <lineage>
        <taxon>Eukaryota</taxon>
        <taxon>Metazoa</taxon>
        <taxon>Chordata</taxon>
        <taxon>Craniata</taxon>
        <taxon>Vertebrata</taxon>
        <taxon>Euteleostomi</taxon>
        <taxon>Mammalia</taxon>
        <taxon>Eutheria</taxon>
        <taxon>Euarchontoglires</taxon>
        <taxon>Glires</taxon>
        <taxon>Rodentia</taxon>
        <taxon>Myomorpha</taxon>
        <taxon>Muroidea</taxon>
        <taxon>Muridae</taxon>
        <taxon>Murinae</taxon>
        <taxon>Mus</taxon>
        <taxon>Mus</taxon>
    </lineage>
</organism>
<dbReference type="EC" id="1.6.2.2"/>
<dbReference type="EMBL" id="AK085272">
    <property type="protein sequence ID" value="BAC39408.1"/>
    <property type="molecule type" value="mRNA"/>
</dbReference>
<dbReference type="EMBL" id="AK147952">
    <property type="protein sequence ID" value="BAE28247.1"/>
    <property type="molecule type" value="mRNA"/>
</dbReference>
<dbReference type="EMBL" id="BC107238">
    <property type="protein sequence ID" value="AAI07239.1"/>
    <property type="molecule type" value="mRNA"/>
</dbReference>
<dbReference type="EMBL" id="BC107239">
    <property type="protein sequence ID" value="AAI07240.1"/>
    <property type="molecule type" value="mRNA"/>
</dbReference>
<dbReference type="CCDS" id="CCDS57579.1">
    <molecule id="Q3KNK3-2"/>
</dbReference>
<dbReference type="CCDS" id="CCDS85373.1">
    <molecule id="Q3KNK3-1"/>
</dbReference>
<dbReference type="RefSeq" id="NP_001192156.1">
    <molecule id="Q3KNK3-2"/>
    <property type="nucleotide sequence ID" value="NM_001205227.1"/>
</dbReference>
<dbReference type="RefSeq" id="NP_796190.1">
    <molecule id="Q3KNK3-1"/>
    <property type="nucleotide sequence ID" value="NM_177216.4"/>
</dbReference>
<dbReference type="RefSeq" id="XP_017177793.1">
    <molecule id="Q3KNK3-1"/>
    <property type="nucleotide sequence ID" value="XM_017322304.3"/>
</dbReference>
<dbReference type="RefSeq" id="XP_017177794.1">
    <molecule id="Q3KNK3-1"/>
    <property type="nucleotide sequence ID" value="XM_017322305.3"/>
</dbReference>
<dbReference type="SMR" id="Q3KNK3"/>
<dbReference type="FunCoup" id="Q3KNK3">
    <property type="interactions" value="546"/>
</dbReference>
<dbReference type="STRING" id="10090.ENSMUSP00000050061"/>
<dbReference type="iPTMnet" id="Q3KNK3"/>
<dbReference type="PhosphoSitePlus" id="Q3KNK3"/>
<dbReference type="jPOST" id="Q3KNK3"/>
<dbReference type="PaxDb" id="10090-ENSMUSP00000050061"/>
<dbReference type="PeptideAtlas" id="Q3KNK3"/>
<dbReference type="ProteomicsDB" id="252782">
    <molecule id="Q3KNK3-1"/>
</dbReference>
<dbReference type="ProteomicsDB" id="252783">
    <molecule id="Q3KNK3-2"/>
</dbReference>
<dbReference type="Antibodypedia" id="24030">
    <property type="antibodies" value="128 antibodies from 22 providers"/>
</dbReference>
<dbReference type="Ensembl" id="ENSMUST00000052438.8">
    <molecule id="Q3KNK3-2"/>
    <property type="protein sequence ID" value="ENSMUSP00000050061.8"/>
    <property type="gene ID" value="ENSMUSG00000048065.9"/>
</dbReference>
<dbReference type="Ensembl" id="ENSMUST00000208217.2">
    <molecule id="Q3KNK3-1"/>
    <property type="protein sequence ID" value="ENSMUSP00000146504.2"/>
    <property type="gene ID" value="ENSMUSG00000048065.9"/>
</dbReference>
<dbReference type="GeneID" id="320635"/>
<dbReference type="KEGG" id="mmu:320635"/>
<dbReference type="UCSC" id="uc009jbi.2">
    <molecule id="Q3KNK3-1"/>
    <property type="organism name" value="mouse"/>
</dbReference>
<dbReference type="UCSC" id="uc012frx.2">
    <molecule id="Q3KNK3-2"/>
    <property type="organism name" value="mouse"/>
</dbReference>
<dbReference type="AGR" id="MGI:2444415"/>
<dbReference type="CTD" id="51700"/>
<dbReference type="MGI" id="MGI:2444415">
    <property type="gene designation" value="Cyb5r2"/>
</dbReference>
<dbReference type="VEuPathDB" id="HostDB:ENSMUSG00000048065"/>
<dbReference type="eggNOG" id="KOG0534">
    <property type="taxonomic scope" value="Eukaryota"/>
</dbReference>
<dbReference type="GeneTree" id="ENSGT00940000153962"/>
<dbReference type="HOGENOM" id="CLU_003827_9_2_1"/>
<dbReference type="InParanoid" id="Q3KNK3"/>
<dbReference type="OMA" id="LDMKGPF"/>
<dbReference type="PhylomeDB" id="Q3KNK3"/>
<dbReference type="TreeFam" id="TF314333"/>
<dbReference type="Reactome" id="R-MMU-1237044">
    <property type="pathway name" value="Erythrocytes take up carbon dioxide and release oxygen"/>
</dbReference>
<dbReference type="BioGRID-ORCS" id="320635">
    <property type="hits" value="3 hits in 77 CRISPR screens"/>
</dbReference>
<dbReference type="PRO" id="PR:Q3KNK3"/>
<dbReference type="Proteomes" id="UP000000589">
    <property type="component" value="Chromosome 7"/>
</dbReference>
<dbReference type="RNAct" id="Q3KNK3">
    <property type="molecule type" value="protein"/>
</dbReference>
<dbReference type="Bgee" id="ENSMUSG00000048065">
    <property type="expression patterns" value="Expressed in animal zygote and 42 other cell types or tissues"/>
</dbReference>
<dbReference type="GO" id="GO:0005789">
    <property type="term" value="C:endoplasmic reticulum membrane"/>
    <property type="evidence" value="ECO:0007669"/>
    <property type="project" value="UniProtKB-ARBA"/>
</dbReference>
<dbReference type="GO" id="GO:0005739">
    <property type="term" value="C:mitochondrion"/>
    <property type="evidence" value="ECO:0007005"/>
    <property type="project" value="MGI"/>
</dbReference>
<dbReference type="GO" id="GO:0004128">
    <property type="term" value="F:cytochrome-b5 reductase activity, acting on NAD(P)H"/>
    <property type="evidence" value="ECO:0007669"/>
    <property type="project" value="UniProtKB-EC"/>
</dbReference>
<dbReference type="GO" id="GO:0016126">
    <property type="term" value="P:sterol biosynthetic process"/>
    <property type="evidence" value="ECO:0007669"/>
    <property type="project" value="UniProtKB-KW"/>
</dbReference>
<dbReference type="CDD" id="cd06183">
    <property type="entry name" value="cyt_b5_reduct_like"/>
    <property type="match status" value="1"/>
</dbReference>
<dbReference type="FunFam" id="2.40.30.10:FF:000021">
    <property type="entry name" value="NADH-cytochrome b5 reductase"/>
    <property type="match status" value="1"/>
</dbReference>
<dbReference type="FunFam" id="3.40.50.80:FF:000005">
    <property type="entry name" value="NADH-cytochrome b5 reductase"/>
    <property type="match status" value="1"/>
</dbReference>
<dbReference type="Gene3D" id="3.40.50.80">
    <property type="entry name" value="Nucleotide-binding domain of ferredoxin-NADP reductase (FNR) module"/>
    <property type="match status" value="1"/>
</dbReference>
<dbReference type="Gene3D" id="2.40.30.10">
    <property type="entry name" value="Translation factors"/>
    <property type="match status" value="1"/>
</dbReference>
<dbReference type="InterPro" id="IPR001834">
    <property type="entry name" value="CBR-like"/>
</dbReference>
<dbReference type="InterPro" id="IPR008333">
    <property type="entry name" value="Cbr1-like_FAD-bd_dom"/>
</dbReference>
<dbReference type="InterPro" id="IPR017927">
    <property type="entry name" value="FAD-bd_FR_type"/>
</dbReference>
<dbReference type="InterPro" id="IPR001709">
    <property type="entry name" value="Flavoprot_Pyr_Nucl_cyt_Rdtase"/>
</dbReference>
<dbReference type="InterPro" id="IPR039261">
    <property type="entry name" value="FNR_nucleotide-bd"/>
</dbReference>
<dbReference type="InterPro" id="IPR001433">
    <property type="entry name" value="OxRdtase_FAD/NAD-bd"/>
</dbReference>
<dbReference type="InterPro" id="IPR017938">
    <property type="entry name" value="Riboflavin_synthase-like_b-brl"/>
</dbReference>
<dbReference type="PANTHER" id="PTHR19370">
    <property type="entry name" value="NADH-CYTOCHROME B5 REDUCTASE"/>
    <property type="match status" value="1"/>
</dbReference>
<dbReference type="PANTHER" id="PTHR19370:SF108">
    <property type="entry name" value="NADH-CYTOCHROME B5 REDUCTASE 2"/>
    <property type="match status" value="1"/>
</dbReference>
<dbReference type="Pfam" id="PF00970">
    <property type="entry name" value="FAD_binding_6"/>
    <property type="match status" value="1"/>
</dbReference>
<dbReference type="Pfam" id="PF00175">
    <property type="entry name" value="NAD_binding_1"/>
    <property type="match status" value="1"/>
</dbReference>
<dbReference type="PRINTS" id="PR00406">
    <property type="entry name" value="CYTB5RDTASE"/>
</dbReference>
<dbReference type="PRINTS" id="PR00371">
    <property type="entry name" value="FPNCR"/>
</dbReference>
<dbReference type="SUPFAM" id="SSF52343">
    <property type="entry name" value="Ferredoxin reductase-like, C-terminal NADP-linked domain"/>
    <property type="match status" value="1"/>
</dbReference>
<dbReference type="SUPFAM" id="SSF63380">
    <property type="entry name" value="Riboflavin synthase domain-like"/>
    <property type="match status" value="1"/>
</dbReference>
<dbReference type="PROSITE" id="PS51384">
    <property type="entry name" value="FAD_FR"/>
    <property type="match status" value="1"/>
</dbReference>
<proteinExistence type="evidence at transcript level"/>